<dbReference type="EMBL" id="CH408079">
    <property type="protein sequence ID" value="EEQ39609.1"/>
    <property type="molecule type" value="Genomic_DNA"/>
</dbReference>
<dbReference type="RefSeq" id="XP_002616496.1">
    <property type="nucleotide sequence ID" value="XM_002616450.1"/>
</dbReference>
<dbReference type="SMR" id="C4Y6F4"/>
<dbReference type="FunCoup" id="C4Y6F4">
    <property type="interactions" value="63"/>
</dbReference>
<dbReference type="STRING" id="306902.C4Y6F4"/>
<dbReference type="GeneID" id="8496555"/>
<dbReference type="KEGG" id="clu:CLUG_03737"/>
<dbReference type="VEuPathDB" id="FungiDB:CLUG_03737"/>
<dbReference type="HOGENOM" id="CLU_476594_0_0_1"/>
<dbReference type="InParanoid" id="C4Y6F4"/>
<dbReference type="OMA" id="PGCLERQ"/>
<dbReference type="OrthoDB" id="63917at4891"/>
<dbReference type="Proteomes" id="UP000007703">
    <property type="component" value="Unassembled WGS sequence"/>
</dbReference>
<dbReference type="GO" id="GO:0032865">
    <property type="term" value="C:ERMES complex"/>
    <property type="evidence" value="ECO:0007669"/>
    <property type="project" value="UniProtKB-UniRule"/>
</dbReference>
<dbReference type="GO" id="GO:0008289">
    <property type="term" value="F:lipid binding"/>
    <property type="evidence" value="ECO:0007669"/>
    <property type="project" value="UniProtKB-KW"/>
</dbReference>
<dbReference type="GO" id="GO:0000002">
    <property type="term" value="P:mitochondrial genome maintenance"/>
    <property type="evidence" value="ECO:0007669"/>
    <property type="project" value="UniProtKB-UniRule"/>
</dbReference>
<dbReference type="GO" id="GO:1990456">
    <property type="term" value="P:mitochondrion-endoplasmic reticulum membrane tethering"/>
    <property type="evidence" value="ECO:0007669"/>
    <property type="project" value="TreeGrafter"/>
</dbReference>
<dbReference type="GO" id="GO:0015914">
    <property type="term" value="P:phospholipid transport"/>
    <property type="evidence" value="ECO:0007669"/>
    <property type="project" value="TreeGrafter"/>
</dbReference>
<dbReference type="CDD" id="cd21673">
    <property type="entry name" value="SMP_Mdm34"/>
    <property type="match status" value="1"/>
</dbReference>
<dbReference type="HAMAP" id="MF_03105">
    <property type="entry name" value="Mdm34"/>
    <property type="match status" value="1"/>
</dbReference>
<dbReference type="InterPro" id="IPR027536">
    <property type="entry name" value="Mdm34"/>
</dbReference>
<dbReference type="InterPro" id="IPR031468">
    <property type="entry name" value="SMP_LBD"/>
</dbReference>
<dbReference type="PANTHER" id="PTHR28185">
    <property type="entry name" value="MITOCHONDRIAL DISTRIBUTION AND MORPHOLOGY PROTEIN 34"/>
    <property type="match status" value="1"/>
</dbReference>
<dbReference type="PANTHER" id="PTHR28185:SF1">
    <property type="entry name" value="MITOCHONDRIAL DISTRIBUTION AND MORPHOLOGY PROTEIN 34"/>
    <property type="match status" value="1"/>
</dbReference>
<dbReference type="PROSITE" id="PS51847">
    <property type="entry name" value="SMP"/>
    <property type="match status" value="1"/>
</dbReference>
<reference key="1">
    <citation type="journal article" date="2009" name="Nature">
        <title>Evolution of pathogenicity and sexual reproduction in eight Candida genomes.</title>
        <authorList>
            <person name="Butler G."/>
            <person name="Rasmussen M.D."/>
            <person name="Lin M.F."/>
            <person name="Santos M.A.S."/>
            <person name="Sakthikumar S."/>
            <person name="Munro C.A."/>
            <person name="Rheinbay E."/>
            <person name="Grabherr M."/>
            <person name="Forche A."/>
            <person name="Reedy J.L."/>
            <person name="Agrafioti I."/>
            <person name="Arnaud M.B."/>
            <person name="Bates S."/>
            <person name="Brown A.J.P."/>
            <person name="Brunke S."/>
            <person name="Costanzo M.C."/>
            <person name="Fitzpatrick D.A."/>
            <person name="de Groot P.W.J."/>
            <person name="Harris D."/>
            <person name="Hoyer L.L."/>
            <person name="Hube B."/>
            <person name="Klis F.M."/>
            <person name="Kodira C."/>
            <person name="Lennard N."/>
            <person name="Logue M.E."/>
            <person name="Martin R."/>
            <person name="Neiman A.M."/>
            <person name="Nikolaou E."/>
            <person name="Quail M.A."/>
            <person name="Quinn J."/>
            <person name="Santos M.C."/>
            <person name="Schmitzberger F.F."/>
            <person name="Sherlock G."/>
            <person name="Shah P."/>
            <person name="Silverstein K.A.T."/>
            <person name="Skrzypek M.S."/>
            <person name="Soll D."/>
            <person name="Staggs R."/>
            <person name="Stansfield I."/>
            <person name="Stumpf M.P.H."/>
            <person name="Sudbery P.E."/>
            <person name="Srikantha T."/>
            <person name="Zeng Q."/>
            <person name="Berman J."/>
            <person name="Berriman M."/>
            <person name="Heitman J."/>
            <person name="Gow N.A.R."/>
            <person name="Lorenz M.C."/>
            <person name="Birren B.W."/>
            <person name="Kellis M."/>
            <person name="Cuomo C.A."/>
        </authorList>
    </citation>
    <scope>NUCLEOTIDE SEQUENCE [LARGE SCALE GENOMIC DNA]</scope>
    <source>
        <strain>ATCC 42720</strain>
    </source>
</reference>
<comment type="function">
    <text evidence="1">Component of the ERMES/MDM complex, which serves as a molecular tether to connect the endoplasmic reticulum (ER) and mitochondria. Components of this complex are involved in the control of mitochondrial shape and protein biogenesis, and function in nonvesicular lipid trafficking between the ER and mitochondria. MDM34 is required for the interaction of the ER-resident membrane protein MMM1 and the outer mitochondrial membrane-resident beta-barrel protein MDM10.</text>
</comment>
<comment type="subunit">
    <text evidence="1">Component of the ER-mitochondria encounter structure (ERMES) or MDM complex, composed of MMM1, MDM10, MDM12 and MDM34.</text>
</comment>
<comment type="subcellular location">
    <subcellularLocation>
        <location evidence="1">Mitochondrion outer membrane</location>
        <topology evidence="1">Multi-pass membrane protein</topology>
    </subcellularLocation>
    <text evidence="1">The ERMES/MDM complex localizes to a few discrete foci (around 10 per single cell), that represent mitochondria-endoplasmic reticulum junctions. These foci are often found next to mtDNA nucleoids.</text>
</comment>
<comment type="domain">
    <text evidence="1">Lacks alpha-helical transmembrane segments, suggesting that it resides in the membrane via beta-sheet conformations similar to those predicted for other outer membrane proteins and porin.</text>
</comment>
<comment type="domain">
    <text evidence="1">The SMP-LTD domain is a barrel-like domain that can bind various types of glycerophospholipids in its interior and mediate their transfer between two adjacent bilayers.</text>
</comment>
<comment type="similarity">
    <text evidence="1">Belongs to the MDM34 family.</text>
</comment>
<proteinExistence type="inferred from homology"/>
<organism>
    <name type="scientific">Clavispora lusitaniae (strain ATCC 42720)</name>
    <name type="common">Yeast</name>
    <name type="synonym">Candida lusitaniae</name>
    <dbReference type="NCBI Taxonomy" id="306902"/>
    <lineage>
        <taxon>Eukaryota</taxon>
        <taxon>Fungi</taxon>
        <taxon>Dikarya</taxon>
        <taxon>Ascomycota</taxon>
        <taxon>Saccharomycotina</taxon>
        <taxon>Pichiomycetes</taxon>
        <taxon>Metschnikowiaceae</taxon>
        <taxon>Clavispora</taxon>
    </lineage>
</organism>
<sequence length="543" mass="60730">MSFNVNWNSLETDSLRSWTVELLTEALNSGKRPNILASDITIKDLNFGKIAPRFEILEIGELDRDRFRGIFKIDYNGDFHLTLHTKVQANPLKIYSDNSLEKEISASSPFVTPDFLLSSDAFNIPLDLKLSDIKISGIGIIVFSKSKGLTMVFRNDPLDSIKVSSTFDTVQVLATFLQNQIENQIRDLFRETLPTLLHKVSLKYTSSNNTNDIIDNLKDHLSNNVYSNALESLEVENVSPGNLQKLAKIYSSRETLKLNVPKLKRIVQRNHLEKFNKNLNPNLASCLYTNMGLQEYSGFSGVSSSYNSIPVGLIANEDFKKVDEILQEISSIQSKNFKSGSNDHKPAKRRTIKLGKGMRQKKVDMQNVDESTLNSINMSRCATEYCDTLSDVSTVLSDDQHNHIEQPTPLKVFTDTRPPLRNVVYTEGYKCSSPMNSNSSFVGSVGLGNNFFQIASGCAPSASPLRNDLSGQKSVHSHDVKVKVKKSMNRIDVSQINEKLNGGFNNGTSKEAMHNENKAFSHNDPSITPFELPPPPYHQLSRA</sequence>
<name>MDM34_CLAL4</name>
<gene>
    <name evidence="1" type="primary">MDM34</name>
    <name type="ORF">CLUG_03737</name>
</gene>
<keyword id="KW-0445">Lipid transport</keyword>
<keyword id="KW-0446">Lipid-binding</keyword>
<keyword id="KW-0472">Membrane</keyword>
<keyword id="KW-0496">Mitochondrion</keyword>
<keyword id="KW-1000">Mitochondrion outer membrane</keyword>
<keyword id="KW-1185">Reference proteome</keyword>
<keyword id="KW-0812">Transmembrane</keyword>
<keyword id="KW-1134">Transmembrane beta strand</keyword>
<keyword id="KW-0813">Transport</keyword>
<accession>C4Y6F4</accession>
<evidence type="ECO:0000255" key="1">
    <source>
        <dbReference type="HAMAP-Rule" id="MF_03105"/>
    </source>
</evidence>
<evidence type="ECO:0000256" key="2">
    <source>
        <dbReference type="SAM" id="MobiDB-lite"/>
    </source>
</evidence>
<feature type="chain" id="PRO_0000384337" description="Mitochondrial distribution and morphology protein 34">
    <location>
        <begin position="1"/>
        <end position="543"/>
    </location>
</feature>
<feature type="domain" description="SMP-LTD" evidence="1">
    <location>
        <begin position="1"/>
        <end position="202"/>
    </location>
</feature>
<feature type="region of interest" description="Disordered" evidence="2">
    <location>
        <begin position="519"/>
        <end position="543"/>
    </location>
</feature>
<protein>
    <recommendedName>
        <fullName evidence="1">Mitochondrial distribution and morphology protein 34</fullName>
    </recommendedName>
</protein>